<accession>A0K6Q0</accession>
<name>RGMG1_BURCH</name>
<protein>
    <recommendedName>
        <fullName evidence="1">Putative ribose/galactose/methyl galactoside import ATP-binding protein 1</fullName>
        <ecNumber evidence="1">7.5.2.11</ecNumber>
        <ecNumber evidence="1">7.5.2.7</ecNumber>
    </recommendedName>
</protein>
<dbReference type="EC" id="7.5.2.11" evidence="1"/>
<dbReference type="EC" id="7.5.2.7" evidence="1"/>
<dbReference type="EMBL" id="CP000458">
    <property type="protein sequence ID" value="ABK08177.1"/>
    <property type="molecule type" value="Genomic_DNA"/>
</dbReference>
<dbReference type="RefSeq" id="WP_011545207.1">
    <property type="nucleotide sequence ID" value="NC_008542.1"/>
</dbReference>
<dbReference type="SMR" id="A0K6Q0"/>
<dbReference type="KEGG" id="bch:Bcen2424_1425"/>
<dbReference type="HOGENOM" id="CLU_000604_92_3_4"/>
<dbReference type="GO" id="GO:0005886">
    <property type="term" value="C:plasma membrane"/>
    <property type="evidence" value="ECO:0007669"/>
    <property type="project" value="UniProtKB-SubCell"/>
</dbReference>
<dbReference type="GO" id="GO:0015611">
    <property type="term" value="F:ABC-type D-ribose transporter activity"/>
    <property type="evidence" value="ECO:0007669"/>
    <property type="project" value="UniProtKB-EC"/>
</dbReference>
<dbReference type="GO" id="GO:0005524">
    <property type="term" value="F:ATP binding"/>
    <property type="evidence" value="ECO:0007669"/>
    <property type="project" value="UniProtKB-KW"/>
</dbReference>
<dbReference type="GO" id="GO:0016887">
    <property type="term" value="F:ATP hydrolysis activity"/>
    <property type="evidence" value="ECO:0007669"/>
    <property type="project" value="InterPro"/>
</dbReference>
<dbReference type="CDD" id="cd03216">
    <property type="entry name" value="ABC_Carb_Monos_I"/>
    <property type="match status" value="1"/>
</dbReference>
<dbReference type="CDD" id="cd03215">
    <property type="entry name" value="ABC_Carb_Monos_II"/>
    <property type="match status" value="1"/>
</dbReference>
<dbReference type="FunFam" id="3.40.50.300:FF:000127">
    <property type="entry name" value="Ribose import ATP-binding protein RbsA"/>
    <property type="match status" value="1"/>
</dbReference>
<dbReference type="Gene3D" id="3.40.50.300">
    <property type="entry name" value="P-loop containing nucleotide triphosphate hydrolases"/>
    <property type="match status" value="2"/>
</dbReference>
<dbReference type="InterPro" id="IPR003593">
    <property type="entry name" value="AAA+_ATPase"/>
</dbReference>
<dbReference type="InterPro" id="IPR050107">
    <property type="entry name" value="ABC_carbohydrate_import_ATPase"/>
</dbReference>
<dbReference type="InterPro" id="IPR003439">
    <property type="entry name" value="ABC_transporter-like_ATP-bd"/>
</dbReference>
<dbReference type="InterPro" id="IPR017871">
    <property type="entry name" value="ABC_transporter-like_CS"/>
</dbReference>
<dbReference type="InterPro" id="IPR027417">
    <property type="entry name" value="P-loop_NTPase"/>
</dbReference>
<dbReference type="PANTHER" id="PTHR43790">
    <property type="entry name" value="CARBOHYDRATE TRANSPORT ATP-BINDING PROTEIN MG119-RELATED"/>
    <property type="match status" value="1"/>
</dbReference>
<dbReference type="PANTHER" id="PTHR43790:SF7">
    <property type="entry name" value="GALACTOSE_METHYL GALACTOSIDE IMPORT ATP-BINDING PROTEIN MGLA"/>
    <property type="match status" value="1"/>
</dbReference>
<dbReference type="Pfam" id="PF00005">
    <property type="entry name" value="ABC_tran"/>
    <property type="match status" value="2"/>
</dbReference>
<dbReference type="SMART" id="SM00382">
    <property type="entry name" value="AAA"/>
    <property type="match status" value="2"/>
</dbReference>
<dbReference type="SUPFAM" id="SSF52540">
    <property type="entry name" value="P-loop containing nucleoside triphosphate hydrolases"/>
    <property type="match status" value="2"/>
</dbReference>
<dbReference type="PROSITE" id="PS00211">
    <property type="entry name" value="ABC_TRANSPORTER_1"/>
    <property type="match status" value="1"/>
</dbReference>
<dbReference type="PROSITE" id="PS50893">
    <property type="entry name" value="ABC_TRANSPORTER_2"/>
    <property type="match status" value="2"/>
</dbReference>
<dbReference type="PROSITE" id="PS51260">
    <property type="entry name" value="MGLA"/>
    <property type="match status" value="1"/>
</dbReference>
<dbReference type="PROSITE" id="PS51254">
    <property type="entry name" value="RBSA"/>
    <property type="match status" value="1"/>
</dbReference>
<reference key="1">
    <citation type="submission" date="2006-08" db="EMBL/GenBank/DDBJ databases">
        <title>Complete sequence of chromosome 1 of Burkholderia cenocepacia HI2424.</title>
        <authorList>
            <person name="Copeland A."/>
            <person name="Lucas S."/>
            <person name="Lapidus A."/>
            <person name="Barry K."/>
            <person name="Detter J.C."/>
            <person name="Glavina del Rio T."/>
            <person name="Hammon N."/>
            <person name="Israni S."/>
            <person name="Pitluck S."/>
            <person name="Chain P."/>
            <person name="Malfatti S."/>
            <person name="Shin M."/>
            <person name="Vergez L."/>
            <person name="Schmutz J."/>
            <person name="Larimer F."/>
            <person name="Land M."/>
            <person name="Hauser L."/>
            <person name="Kyrpides N."/>
            <person name="Kim E."/>
            <person name="LiPuma J.J."/>
            <person name="Gonzalez C.F."/>
            <person name="Konstantinidis K."/>
            <person name="Tiedje J.M."/>
            <person name="Richardson P."/>
        </authorList>
    </citation>
    <scope>NUCLEOTIDE SEQUENCE [LARGE SCALE GENOMIC DNA]</scope>
    <source>
        <strain>HI2424</strain>
    </source>
</reference>
<sequence length="524" mass="57580">MFTARIARSMASESAPAASSVAPGSSGAPMADCVLEVRGVGKSFPGVVALDGVQFRVRRGTVHALMGENGAGKSTLMKIIAGVYTPDQGEILINGEPVVLNGPLDALDRGIAMIHQELNLMPYMTVAENIWIRREPKNRFGLIDHAELRRRTAALFERLSIDIDPETDVRTLTVASRQMVEIAKAVSFDSDVLIMDEPTSALTDKEVTHLFRIIRQLREQGKGIVYITHKMNELFEIADEFSVFRDGKYIGTHASSDVTRDDIIRMMVGREITQMFPKEEVPIGDVVLSVKDLCVDGVFRDVSFELRAGEILGVAGLVGSGRSNVAEALFGVVPATSGEIRIDGKPVRISTPAQAMKHGMAFLTEDRKDSGCFLNLDLLANMEAAVLSRRYVKFNFVQQAQLKRDCEEMSRMLRVKSPGLHEEIQNLSGGNQQKVLIGRWLLTQPRILILDEPTRGIDVGAKAEIHRLVSALAGKGVAVLMISSEMPEVLGMSDRVMVMHEGRMTGIVDRKDADQVRIMDLASR</sequence>
<comment type="function">
    <text evidence="1">Part of an ABC transporter complex involved in carbohydrate import. Could be involved in ribose, galactose and/or methyl galactoside import. Responsible for energy coupling to the transport system.</text>
</comment>
<comment type="catalytic activity">
    <reaction evidence="1">
        <text>D-ribose(out) + ATP + H2O = D-ribose(in) + ADP + phosphate + H(+)</text>
        <dbReference type="Rhea" id="RHEA:29903"/>
        <dbReference type="ChEBI" id="CHEBI:15377"/>
        <dbReference type="ChEBI" id="CHEBI:15378"/>
        <dbReference type="ChEBI" id="CHEBI:30616"/>
        <dbReference type="ChEBI" id="CHEBI:43474"/>
        <dbReference type="ChEBI" id="CHEBI:47013"/>
        <dbReference type="ChEBI" id="CHEBI:456216"/>
        <dbReference type="EC" id="7.5.2.7"/>
    </reaction>
</comment>
<comment type="catalytic activity">
    <reaction evidence="1">
        <text>D-galactose(out) + ATP + H2O = D-galactose(in) + ADP + phosphate + H(+)</text>
        <dbReference type="Rhea" id="RHEA:60156"/>
        <dbReference type="ChEBI" id="CHEBI:4139"/>
        <dbReference type="ChEBI" id="CHEBI:15377"/>
        <dbReference type="ChEBI" id="CHEBI:15378"/>
        <dbReference type="ChEBI" id="CHEBI:30616"/>
        <dbReference type="ChEBI" id="CHEBI:43474"/>
        <dbReference type="ChEBI" id="CHEBI:456216"/>
        <dbReference type="EC" id="7.5.2.11"/>
    </reaction>
</comment>
<comment type="subcellular location">
    <subcellularLocation>
        <location evidence="1">Cell inner membrane</location>
        <topology evidence="1">Peripheral membrane protein</topology>
    </subcellularLocation>
</comment>
<comment type="similarity">
    <text evidence="1">Belongs to the ABC transporter superfamily. Carbohydrate importer 2 (CUT2) (TC 3.A.1.2) family.</text>
</comment>
<evidence type="ECO:0000255" key="1">
    <source>
        <dbReference type="HAMAP-Rule" id="MF_01717"/>
    </source>
</evidence>
<gene>
    <name type="ordered locus">Bcen2424_1425</name>
</gene>
<feature type="chain" id="PRO_0000277553" description="Putative ribose/galactose/methyl galactoside import ATP-binding protein 1">
    <location>
        <begin position="1"/>
        <end position="524"/>
    </location>
</feature>
<feature type="domain" description="ABC transporter 1" evidence="1">
    <location>
        <begin position="35"/>
        <end position="271"/>
    </location>
</feature>
<feature type="domain" description="ABC transporter 2" evidence="1">
    <location>
        <begin position="281"/>
        <end position="520"/>
    </location>
</feature>
<feature type="binding site" evidence="1">
    <location>
        <begin position="67"/>
        <end position="74"/>
    </location>
    <ligand>
        <name>ATP</name>
        <dbReference type="ChEBI" id="CHEBI:30616"/>
    </ligand>
</feature>
<proteinExistence type="inferred from homology"/>
<keyword id="KW-0067">ATP-binding</keyword>
<keyword id="KW-0997">Cell inner membrane</keyword>
<keyword id="KW-1003">Cell membrane</keyword>
<keyword id="KW-0472">Membrane</keyword>
<keyword id="KW-0547">Nucleotide-binding</keyword>
<keyword id="KW-0677">Repeat</keyword>
<keyword id="KW-0762">Sugar transport</keyword>
<keyword id="KW-1278">Translocase</keyword>
<keyword id="KW-0813">Transport</keyword>
<organism>
    <name type="scientific">Burkholderia cenocepacia (strain HI2424)</name>
    <dbReference type="NCBI Taxonomy" id="331272"/>
    <lineage>
        <taxon>Bacteria</taxon>
        <taxon>Pseudomonadati</taxon>
        <taxon>Pseudomonadota</taxon>
        <taxon>Betaproteobacteria</taxon>
        <taxon>Burkholderiales</taxon>
        <taxon>Burkholderiaceae</taxon>
        <taxon>Burkholderia</taxon>
        <taxon>Burkholderia cepacia complex</taxon>
    </lineage>
</organism>